<evidence type="ECO:0000255" key="1">
    <source>
        <dbReference type="HAMAP-Rule" id="MF_01405"/>
    </source>
</evidence>
<dbReference type="EC" id="3.6.1.66" evidence="1"/>
<dbReference type="EMBL" id="AE017221">
    <property type="protein sequence ID" value="AAS81632.1"/>
    <property type="molecule type" value="Genomic_DNA"/>
</dbReference>
<dbReference type="SMR" id="Q72I42"/>
<dbReference type="KEGG" id="tth:TT_C1290"/>
<dbReference type="eggNOG" id="COG0127">
    <property type="taxonomic scope" value="Bacteria"/>
</dbReference>
<dbReference type="HOGENOM" id="CLU_082080_0_2_0"/>
<dbReference type="OrthoDB" id="9807456at2"/>
<dbReference type="Proteomes" id="UP000000592">
    <property type="component" value="Chromosome"/>
</dbReference>
<dbReference type="GO" id="GO:0005829">
    <property type="term" value="C:cytosol"/>
    <property type="evidence" value="ECO:0007669"/>
    <property type="project" value="TreeGrafter"/>
</dbReference>
<dbReference type="GO" id="GO:0035870">
    <property type="term" value="F:dITP diphosphatase activity"/>
    <property type="evidence" value="ECO:0007669"/>
    <property type="project" value="RHEA"/>
</dbReference>
<dbReference type="GO" id="GO:0036220">
    <property type="term" value="F:ITP diphosphatase activity"/>
    <property type="evidence" value="ECO:0007669"/>
    <property type="project" value="UniProtKB-EC"/>
</dbReference>
<dbReference type="GO" id="GO:0046872">
    <property type="term" value="F:metal ion binding"/>
    <property type="evidence" value="ECO:0007669"/>
    <property type="project" value="UniProtKB-KW"/>
</dbReference>
<dbReference type="GO" id="GO:0000166">
    <property type="term" value="F:nucleotide binding"/>
    <property type="evidence" value="ECO:0007669"/>
    <property type="project" value="UniProtKB-KW"/>
</dbReference>
<dbReference type="GO" id="GO:0017111">
    <property type="term" value="F:ribonucleoside triphosphate phosphatase activity"/>
    <property type="evidence" value="ECO:0007669"/>
    <property type="project" value="InterPro"/>
</dbReference>
<dbReference type="GO" id="GO:0036222">
    <property type="term" value="F:XTP diphosphatase activity"/>
    <property type="evidence" value="ECO:0007669"/>
    <property type="project" value="RHEA"/>
</dbReference>
<dbReference type="GO" id="GO:0009117">
    <property type="term" value="P:nucleotide metabolic process"/>
    <property type="evidence" value="ECO:0007669"/>
    <property type="project" value="UniProtKB-KW"/>
</dbReference>
<dbReference type="GO" id="GO:0009146">
    <property type="term" value="P:purine nucleoside triphosphate catabolic process"/>
    <property type="evidence" value="ECO:0007669"/>
    <property type="project" value="UniProtKB-UniRule"/>
</dbReference>
<dbReference type="CDD" id="cd00515">
    <property type="entry name" value="HAM1"/>
    <property type="match status" value="1"/>
</dbReference>
<dbReference type="FunFam" id="3.90.950.10:FF:000001">
    <property type="entry name" value="dITP/XTP pyrophosphatase"/>
    <property type="match status" value="1"/>
</dbReference>
<dbReference type="Gene3D" id="3.90.950.10">
    <property type="match status" value="1"/>
</dbReference>
<dbReference type="HAMAP" id="MF_01405">
    <property type="entry name" value="Non_canon_purine_NTPase"/>
    <property type="match status" value="1"/>
</dbReference>
<dbReference type="InterPro" id="IPR020922">
    <property type="entry name" value="dITP/XTP_pyrophosphatase"/>
</dbReference>
<dbReference type="InterPro" id="IPR029001">
    <property type="entry name" value="ITPase-like_fam"/>
</dbReference>
<dbReference type="InterPro" id="IPR002637">
    <property type="entry name" value="RdgB/HAM1"/>
</dbReference>
<dbReference type="NCBIfam" id="TIGR00042">
    <property type="entry name" value="RdgB/HAM1 family non-canonical purine NTP pyrophosphatase"/>
    <property type="match status" value="1"/>
</dbReference>
<dbReference type="PANTHER" id="PTHR11067:SF9">
    <property type="entry name" value="INOSINE TRIPHOSPHATE PYROPHOSPHATASE"/>
    <property type="match status" value="1"/>
</dbReference>
<dbReference type="PANTHER" id="PTHR11067">
    <property type="entry name" value="INOSINE TRIPHOSPHATE PYROPHOSPHATASE/HAM1 PROTEIN"/>
    <property type="match status" value="1"/>
</dbReference>
<dbReference type="Pfam" id="PF01725">
    <property type="entry name" value="Ham1p_like"/>
    <property type="match status" value="1"/>
</dbReference>
<dbReference type="SUPFAM" id="SSF52972">
    <property type="entry name" value="ITPase-like"/>
    <property type="match status" value="1"/>
</dbReference>
<reference key="1">
    <citation type="journal article" date="2004" name="Nat. Biotechnol.">
        <title>The genome sequence of the extreme thermophile Thermus thermophilus.</title>
        <authorList>
            <person name="Henne A."/>
            <person name="Brueggemann H."/>
            <person name="Raasch C."/>
            <person name="Wiezer A."/>
            <person name="Hartsch T."/>
            <person name="Liesegang H."/>
            <person name="Johann A."/>
            <person name="Lienard T."/>
            <person name="Gohl O."/>
            <person name="Martinez-Arias R."/>
            <person name="Jacobi C."/>
            <person name="Starkuviene V."/>
            <person name="Schlenczeck S."/>
            <person name="Dencker S."/>
            <person name="Huber R."/>
            <person name="Klenk H.-P."/>
            <person name="Kramer W."/>
            <person name="Merkl R."/>
            <person name="Gottschalk G."/>
            <person name="Fritz H.-J."/>
        </authorList>
    </citation>
    <scope>NUCLEOTIDE SEQUENCE [LARGE SCALE GENOMIC DNA]</scope>
    <source>
        <strain>ATCC BAA-163 / DSM 7039 / HB27</strain>
    </source>
</reference>
<comment type="function">
    <text evidence="1">Pyrophosphatase that catalyzes the hydrolysis of nucleoside triphosphates to their monophosphate derivatives, with a high preference for the non-canonical purine nucleotides XTP (xanthosine triphosphate), dITP (deoxyinosine triphosphate) and ITP. Seems to function as a house-cleaning enzyme that removes non-canonical purine nucleotides from the nucleotide pool, thus preventing their incorporation into DNA/RNA and avoiding chromosomal lesions.</text>
</comment>
<comment type="catalytic activity">
    <reaction evidence="1">
        <text>XTP + H2O = XMP + diphosphate + H(+)</text>
        <dbReference type="Rhea" id="RHEA:28610"/>
        <dbReference type="ChEBI" id="CHEBI:15377"/>
        <dbReference type="ChEBI" id="CHEBI:15378"/>
        <dbReference type="ChEBI" id="CHEBI:33019"/>
        <dbReference type="ChEBI" id="CHEBI:57464"/>
        <dbReference type="ChEBI" id="CHEBI:61314"/>
        <dbReference type="EC" id="3.6.1.66"/>
    </reaction>
</comment>
<comment type="catalytic activity">
    <reaction evidence="1">
        <text>dITP + H2O = dIMP + diphosphate + H(+)</text>
        <dbReference type="Rhea" id="RHEA:28342"/>
        <dbReference type="ChEBI" id="CHEBI:15377"/>
        <dbReference type="ChEBI" id="CHEBI:15378"/>
        <dbReference type="ChEBI" id="CHEBI:33019"/>
        <dbReference type="ChEBI" id="CHEBI:61194"/>
        <dbReference type="ChEBI" id="CHEBI:61382"/>
        <dbReference type="EC" id="3.6.1.66"/>
    </reaction>
</comment>
<comment type="catalytic activity">
    <reaction evidence="1">
        <text>ITP + H2O = IMP + diphosphate + H(+)</text>
        <dbReference type="Rhea" id="RHEA:29399"/>
        <dbReference type="ChEBI" id="CHEBI:15377"/>
        <dbReference type="ChEBI" id="CHEBI:15378"/>
        <dbReference type="ChEBI" id="CHEBI:33019"/>
        <dbReference type="ChEBI" id="CHEBI:58053"/>
        <dbReference type="ChEBI" id="CHEBI:61402"/>
        <dbReference type="EC" id="3.6.1.66"/>
    </reaction>
</comment>
<comment type="cofactor">
    <cofactor evidence="1">
        <name>Mg(2+)</name>
        <dbReference type="ChEBI" id="CHEBI:18420"/>
    </cofactor>
    <text evidence="1">Binds 1 Mg(2+) ion per subunit.</text>
</comment>
<comment type="subunit">
    <text evidence="1">Homodimer.</text>
</comment>
<comment type="similarity">
    <text evidence="1">Belongs to the HAM1 NTPase family.</text>
</comment>
<accession>Q72I42</accession>
<gene>
    <name type="ordered locus">TT_C1290</name>
</gene>
<protein>
    <recommendedName>
        <fullName evidence="1">dITP/XTP pyrophosphatase</fullName>
        <ecNumber evidence="1">3.6.1.66</ecNumber>
    </recommendedName>
    <alternativeName>
        <fullName evidence="1">Non-canonical purine NTP pyrophosphatase</fullName>
    </alternativeName>
    <alternativeName>
        <fullName evidence="1">Non-standard purine NTP pyrophosphatase</fullName>
    </alternativeName>
    <alternativeName>
        <fullName evidence="1">Nucleoside-triphosphate diphosphatase</fullName>
    </alternativeName>
    <alternativeName>
        <fullName evidence="1">Nucleoside-triphosphate pyrophosphatase</fullName>
        <shortName evidence="1">NTPase</shortName>
    </alternativeName>
</protein>
<keyword id="KW-0378">Hydrolase</keyword>
<keyword id="KW-0460">Magnesium</keyword>
<keyword id="KW-0479">Metal-binding</keyword>
<keyword id="KW-0546">Nucleotide metabolism</keyword>
<keyword id="KW-0547">Nucleotide-binding</keyword>
<organism>
    <name type="scientific">Thermus thermophilus (strain ATCC BAA-163 / DSM 7039 / HB27)</name>
    <dbReference type="NCBI Taxonomy" id="262724"/>
    <lineage>
        <taxon>Bacteria</taxon>
        <taxon>Thermotogati</taxon>
        <taxon>Deinococcota</taxon>
        <taxon>Deinococci</taxon>
        <taxon>Thermales</taxon>
        <taxon>Thermaceae</taxon>
        <taxon>Thermus</taxon>
    </lineage>
</organism>
<sequence length="207" mass="22586">MLRGMKVVLTTGNPGKVRELKEGLAPLGWTLLTLADFALRMPKEEGATFLENALLKAAYVAKATGLPALADDSGLEVYALGGEPGVYSARYGGRATDRERNVYLLERMRHLKGEERKARFVAVLVLAYPDGHAEAYEGSVEGVILEAPRGEGGFGYDPLFYVPEAGKTFAEMGLEEKARYSHRGKALRALLEAYKDGPPPREVSKLE</sequence>
<name>IXTPA_THET2</name>
<proteinExistence type="inferred from homology"/>
<feature type="chain" id="PRO_0000178253" description="dITP/XTP pyrophosphatase">
    <location>
        <begin position="1"/>
        <end position="207"/>
    </location>
</feature>
<feature type="active site" description="Proton acceptor" evidence="1">
    <location>
        <position position="72"/>
    </location>
</feature>
<feature type="binding site" evidence="1">
    <location>
        <begin position="11"/>
        <end position="16"/>
    </location>
    <ligand>
        <name>substrate</name>
    </ligand>
</feature>
<feature type="binding site" evidence="1">
    <location>
        <position position="72"/>
    </location>
    <ligand>
        <name>Mg(2+)</name>
        <dbReference type="ChEBI" id="CHEBI:18420"/>
    </ligand>
</feature>
<feature type="binding site" evidence="1">
    <location>
        <position position="73"/>
    </location>
    <ligand>
        <name>substrate</name>
    </ligand>
</feature>
<feature type="binding site" evidence="1">
    <location>
        <begin position="154"/>
        <end position="157"/>
    </location>
    <ligand>
        <name>substrate</name>
    </ligand>
</feature>
<feature type="binding site" evidence="1">
    <location>
        <position position="177"/>
    </location>
    <ligand>
        <name>substrate</name>
    </ligand>
</feature>
<feature type="binding site" evidence="1">
    <location>
        <begin position="182"/>
        <end position="183"/>
    </location>
    <ligand>
        <name>substrate</name>
    </ligand>
</feature>